<proteinExistence type="evidence at protein level"/>
<dbReference type="EMBL" id="AY781122">
    <property type="protein sequence ID" value="AAW29437.1"/>
    <property type="molecule type" value="mRNA"/>
</dbReference>
<dbReference type="SMR" id="Q5MJP5"/>
<dbReference type="GO" id="GO:0005615">
    <property type="term" value="C:extracellular space"/>
    <property type="evidence" value="ECO:0000314"/>
    <property type="project" value="UniProtKB"/>
</dbReference>
<dbReference type="GO" id="GO:0019871">
    <property type="term" value="F:sodium channel inhibitor activity"/>
    <property type="evidence" value="ECO:0007669"/>
    <property type="project" value="InterPro"/>
</dbReference>
<dbReference type="GO" id="GO:0090729">
    <property type="term" value="F:toxin activity"/>
    <property type="evidence" value="ECO:0007669"/>
    <property type="project" value="UniProtKB-KW"/>
</dbReference>
<dbReference type="FunFam" id="3.30.30.10:FF:000014">
    <property type="match status" value="1"/>
</dbReference>
<dbReference type="Gene3D" id="3.30.30.10">
    <property type="entry name" value="Knottin, scorpion toxin-like"/>
    <property type="match status" value="1"/>
</dbReference>
<dbReference type="InterPro" id="IPR044062">
    <property type="entry name" value="LCN-type_CS_alpha_beta_dom"/>
</dbReference>
<dbReference type="InterPro" id="IPR036574">
    <property type="entry name" value="Scorpion_toxin-like_sf"/>
</dbReference>
<dbReference type="InterPro" id="IPR002061">
    <property type="entry name" value="Scorpion_toxinL/defensin"/>
</dbReference>
<dbReference type="Pfam" id="PF00537">
    <property type="entry name" value="Toxin_3"/>
    <property type="match status" value="1"/>
</dbReference>
<dbReference type="SUPFAM" id="SSF57095">
    <property type="entry name" value="Scorpion toxin-like"/>
    <property type="match status" value="1"/>
</dbReference>
<dbReference type="PROSITE" id="PS51863">
    <property type="entry name" value="LCN_CSAB"/>
    <property type="match status" value="1"/>
</dbReference>
<reference evidence="3 4" key="1">
    <citation type="journal article" date="2004" name="Eur. J. Biochem.">
        <title>Phaiodotoxin, a novel structural class of insect-toxin isolated from the venom of the Mexican scorpion Anuroctonus phaiodactylus.</title>
        <authorList>
            <person name="Valdez-Cruz N.A."/>
            <person name="Batista C.V.F."/>
            <person name="Zamudio F.Z."/>
            <person name="Bosmans F."/>
            <person name="Tytgat J."/>
            <person name="Possani L.D."/>
        </authorList>
    </citation>
    <scope>NUCLEOTIDE SEQUENCE [MRNA]</scope>
    <scope>PROTEIN SEQUENCE OF 19-90</scope>
    <scope>FUNCTION</scope>
    <scope>BIOASSAY</scope>
    <scope>TISSUE SPECIFICITY</scope>
    <scope>SUBCELLULAR LOCATION</scope>
    <scope>MASS SPECTROMETRY</scope>
    <scope>DISULFIDE BONDS</scope>
    <source>
        <tissue evidence="2">Venom</tissue>
    </source>
</reference>
<organism>
    <name type="scientific">Anuroctonus phaiodactylus</name>
    <name type="common">Mafia scorpion</name>
    <dbReference type="NCBI Taxonomy" id="246982"/>
    <lineage>
        <taxon>Eukaryota</taxon>
        <taxon>Metazoa</taxon>
        <taxon>Ecdysozoa</taxon>
        <taxon>Arthropoda</taxon>
        <taxon>Chelicerata</taxon>
        <taxon>Arachnida</taxon>
        <taxon>Scorpiones</taxon>
        <taxon>Iurida</taxon>
        <taxon>Chactoidea</taxon>
        <taxon>Chactidae</taxon>
        <taxon>Uroctoninae</taxon>
        <taxon>Anuroctonus</taxon>
    </lineage>
</organism>
<comment type="function">
    <text evidence="2">Sodium channel (Nav) specific neurotoxin. Causes impairment of movement and mild paralysis in crickets at a dose of 0.5 ug per animal. A dose of 0.8 ug per cricket causes clear flaccid paralysis. A dose of 1.0 ug per cricket causes death within 2 hours. Is not toxic to mice at a dose of 100 ug per 20 g mouse weight.</text>
</comment>
<comment type="subcellular location">
    <subcellularLocation>
        <location evidence="2">Secreted</location>
    </subcellularLocation>
</comment>
<comment type="tissue specificity">
    <text evidence="2">Expressed by the venom gland.</text>
</comment>
<comment type="domain">
    <text evidence="3">Has the structural arrangement of an alpha-helix connected to antiparallel beta-sheets by disulfide bonds (CS-alpha/beta).</text>
</comment>
<comment type="mass spectrometry" mass="7971.0" method="Electrospray" evidence="2"/>
<comment type="similarity">
    <text evidence="3">Belongs to the long (4 C-C) scorpion toxin superfamily. Sodium channel inhibitor family.</text>
</comment>
<feature type="signal peptide" evidence="2">
    <location>
        <begin position="1"/>
        <end position="18"/>
    </location>
</feature>
<feature type="chain" id="PRO_0000035234" description="Phaiodotoxin" evidence="2">
    <location>
        <begin position="19"/>
        <end position="90"/>
    </location>
</feature>
<feature type="domain" description="LCN-type CS-alpha/beta" evidence="1">
    <location>
        <begin position="19"/>
        <end position="90"/>
    </location>
</feature>
<feature type="disulfide bond" evidence="1 2">
    <location>
        <begin position="31"/>
        <end position="56"/>
    </location>
</feature>
<feature type="disulfide bond" evidence="1 2">
    <location>
        <begin position="41"/>
        <end position="68"/>
    </location>
</feature>
<feature type="disulfide bond" evidence="1 2">
    <location>
        <begin position="45"/>
        <end position="70"/>
    </location>
</feature>
<feature type="disulfide bond" evidence="1 2">
    <location>
        <begin position="81"/>
        <end position="89"/>
    </location>
</feature>
<name>SCX1_ANUPH</name>
<protein>
    <recommendedName>
        <fullName>Phaiodotoxin</fullName>
    </recommendedName>
</protein>
<sequence length="90" mass="10124">MKTIPLLFLLFIYFECDGKFIRHKDESFYECGQLIGYQQYCVDACQAHGSKEKGYCKGMAPFGLPGGCYCPKLPSNRVKMCFGALESKCA</sequence>
<evidence type="ECO:0000255" key="1">
    <source>
        <dbReference type="PROSITE-ProRule" id="PRU01210"/>
    </source>
</evidence>
<evidence type="ECO:0000269" key="2">
    <source>
    </source>
</evidence>
<evidence type="ECO:0000305" key="3"/>
<evidence type="ECO:0000312" key="4">
    <source>
        <dbReference type="EMBL" id="AAW29437.1"/>
    </source>
</evidence>
<accession>Q5MJP5</accession>
<accession>P84207</accession>
<gene>
    <name evidence="4" type="primary">phtx</name>
</gene>
<keyword id="KW-0903">Direct protein sequencing</keyword>
<keyword id="KW-1015">Disulfide bond</keyword>
<keyword id="KW-0872">Ion channel impairing toxin</keyword>
<keyword id="KW-0528">Neurotoxin</keyword>
<keyword id="KW-0964">Secreted</keyword>
<keyword id="KW-0732">Signal</keyword>
<keyword id="KW-0800">Toxin</keyword>
<keyword id="KW-0738">Voltage-gated sodium channel impairing toxin</keyword>